<evidence type="ECO:0000255" key="1">
    <source>
        <dbReference type="HAMAP-Rule" id="MF_01380"/>
    </source>
</evidence>
<accession>Q8D3C7</accession>
<reference key="1">
    <citation type="journal article" date="2002" name="Nat. Genet.">
        <title>Genome sequence of the endocellular obligate symbiont of tsetse flies, Wigglesworthia glossinidia.</title>
        <authorList>
            <person name="Akman L."/>
            <person name="Yamashita A."/>
            <person name="Watanabe H."/>
            <person name="Oshima K."/>
            <person name="Shiba T."/>
            <person name="Hattori M."/>
            <person name="Aksoy S."/>
        </authorList>
    </citation>
    <scope>NUCLEOTIDE SEQUENCE [LARGE SCALE GENOMIC DNA]</scope>
</reference>
<dbReference type="EMBL" id="BA000021">
    <property type="protein sequence ID" value="BAC24220.1"/>
    <property type="molecule type" value="Genomic_DNA"/>
</dbReference>
<dbReference type="SMR" id="Q8D3C7"/>
<dbReference type="STRING" id="36870.gene:10368552"/>
<dbReference type="KEGG" id="wbr:yadR"/>
<dbReference type="eggNOG" id="COG0316">
    <property type="taxonomic scope" value="Bacteria"/>
</dbReference>
<dbReference type="HOGENOM" id="CLU_069054_5_3_6"/>
<dbReference type="OrthoDB" id="9801228at2"/>
<dbReference type="Proteomes" id="UP000000562">
    <property type="component" value="Chromosome"/>
</dbReference>
<dbReference type="GO" id="GO:0005829">
    <property type="term" value="C:cytosol"/>
    <property type="evidence" value="ECO:0007669"/>
    <property type="project" value="TreeGrafter"/>
</dbReference>
<dbReference type="GO" id="GO:0051537">
    <property type="term" value="F:2 iron, 2 sulfur cluster binding"/>
    <property type="evidence" value="ECO:0007669"/>
    <property type="project" value="TreeGrafter"/>
</dbReference>
<dbReference type="GO" id="GO:0051539">
    <property type="term" value="F:4 iron, 4 sulfur cluster binding"/>
    <property type="evidence" value="ECO:0007669"/>
    <property type="project" value="TreeGrafter"/>
</dbReference>
<dbReference type="GO" id="GO:0005506">
    <property type="term" value="F:iron ion binding"/>
    <property type="evidence" value="ECO:0007669"/>
    <property type="project" value="UniProtKB-UniRule"/>
</dbReference>
<dbReference type="GO" id="GO:0016226">
    <property type="term" value="P:iron-sulfur cluster assembly"/>
    <property type="evidence" value="ECO:0007669"/>
    <property type="project" value="UniProtKB-UniRule"/>
</dbReference>
<dbReference type="Gene3D" id="2.60.300.12">
    <property type="entry name" value="HesB-like domain"/>
    <property type="match status" value="1"/>
</dbReference>
<dbReference type="HAMAP" id="MF_01380">
    <property type="entry name" value="Fe_S_insert_ErpA"/>
    <property type="match status" value="1"/>
</dbReference>
<dbReference type="InterPro" id="IPR000361">
    <property type="entry name" value="FeS_biogenesis"/>
</dbReference>
<dbReference type="InterPro" id="IPR016092">
    <property type="entry name" value="FeS_cluster_insertion"/>
</dbReference>
<dbReference type="InterPro" id="IPR017870">
    <property type="entry name" value="FeS_cluster_insertion_CS"/>
</dbReference>
<dbReference type="InterPro" id="IPR023063">
    <property type="entry name" value="FeS_cluster_insertion_RrpA"/>
</dbReference>
<dbReference type="InterPro" id="IPR035903">
    <property type="entry name" value="HesB-like_dom_sf"/>
</dbReference>
<dbReference type="NCBIfam" id="TIGR00049">
    <property type="entry name" value="iron-sulfur cluster assembly accessory protein"/>
    <property type="match status" value="1"/>
</dbReference>
<dbReference type="NCBIfam" id="NF010147">
    <property type="entry name" value="PRK13623.1"/>
    <property type="match status" value="1"/>
</dbReference>
<dbReference type="PANTHER" id="PTHR43011">
    <property type="entry name" value="IRON-SULFUR CLUSTER ASSEMBLY 2 HOMOLOG, MITOCHONDRIAL"/>
    <property type="match status" value="1"/>
</dbReference>
<dbReference type="PANTHER" id="PTHR43011:SF1">
    <property type="entry name" value="IRON-SULFUR CLUSTER ASSEMBLY 2 HOMOLOG, MITOCHONDRIAL"/>
    <property type="match status" value="1"/>
</dbReference>
<dbReference type="Pfam" id="PF01521">
    <property type="entry name" value="Fe-S_biosyn"/>
    <property type="match status" value="1"/>
</dbReference>
<dbReference type="SUPFAM" id="SSF89360">
    <property type="entry name" value="HesB-like domain"/>
    <property type="match status" value="1"/>
</dbReference>
<dbReference type="PROSITE" id="PS01152">
    <property type="entry name" value="HESB"/>
    <property type="match status" value="1"/>
</dbReference>
<feature type="chain" id="PRO_0000311574" description="Iron-sulfur cluster insertion protein ErpA">
    <location>
        <begin position="1"/>
        <end position="114"/>
    </location>
</feature>
<feature type="binding site" evidence="1">
    <location>
        <position position="42"/>
    </location>
    <ligand>
        <name>iron-sulfur cluster</name>
        <dbReference type="ChEBI" id="CHEBI:30408"/>
    </ligand>
</feature>
<feature type="binding site" evidence="1">
    <location>
        <position position="106"/>
    </location>
    <ligand>
        <name>iron-sulfur cluster</name>
        <dbReference type="ChEBI" id="CHEBI:30408"/>
    </ligand>
</feature>
<feature type="binding site" evidence="1">
    <location>
        <position position="108"/>
    </location>
    <ligand>
        <name>iron-sulfur cluster</name>
        <dbReference type="ChEBI" id="CHEBI:30408"/>
    </ligand>
</feature>
<comment type="function">
    <text evidence="1">Required for insertion of 4Fe-4S clusters for at least IspG.</text>
</comment>
<comment type="cofactor">
    <cofactor evidence="1">
        <name>iron-sulfur cluster</name>
        <dbReference type="ChEBI" id="CHEBI:30408"/>
    </cofactor>
    <text evidence="1">Binds 1 iron-sulfur cluster per subunit.</text>
</comment>
<comment type="subunit">
    <text evidence="1">Homodimer.</text>
</comment>
<comment type="similarity">
    <text evidence="1">Belongs to the HesB/IscA family.</text>
</comment>
<gene>
    <name evidence="1" type="primary">erpA</name>
    <name type="ordered locus">WIGBR0740</name>
</gene>
<keyword id="KW-0408">Iron</keyword>
<keyword id="KW-0411">Iron-sulfur</keyword>
<keyword id="KW-0479">Metal-binding</keyword>
<keyword id="KW-1185">Reference proteome</keyword>
<protein>
    <recommendedName>
        <fullName evidence="1">Iron-sulfur cluster insertion protein ErpA</fullName>
    </recommendedName>
</protein>
<name>ERPA_WIGBR</name>
<organism>
    <name type="scientific">Wigglesworthia glossinidia brevipalpis</name>
    <dbReference type="NCBI Taxonomy" id="36870"/>
    <lineage>
        <taxon>Bacteria</taxon>
        <taxon>Pseudomonadati</taxon>
        <taxon>Pseudomonadota</taxon>
        <taxon>Gammaproteobacteria</taxon>
        <taxon>Enterobacterales</taxon>
        <taxon>Erwiniaceae</taxon>
        <taxon>Wigglesworthia</taxon>
    </lineage>
</organism>
<sequence length="114" mass="13048">MENNKLFNLKLTDLAKNKIKNLLKEEKNKNKKFRIYISGGGCNGFQYNFILDEKINKEDHLILFLDVEIVIDSISLQYLIGGVVDYKEELLESCFFVINPNAKTTCSCGTSFSI</sequence>
<proteinExistence type="inferred from homology"/>